<feature type="chain" id="PRO_1000148157" description="6-phosphogluconolactonase">
    <location>
        <begin position="1"/>
        <end position="331"/>
    </location>
</feature>
<feature type="modified residue" description="N6-acetyllysine" evidence="1">
    <location>
        <position position="287"/>
    </location>
</feature>
<protein>
    <recommendedName>
        <fullName evidence="1">6-phosphogluconolactonase</fullName>
        <shortName evidence="1">6-P-gluconolactonase</shortName>
        <ecNumber evidence="1">3.1.1.31</ecNumber>
    </recommendedName>
</protein>
<gene>
    <name evidence="1" type="primary">pgl</name>
    <name type="ordered locus">EcSMS35_0790</name>
</gene>
<evidence type="ECO:0000255" key="1">
    <source>
        <dbReference type="HAMAP-Rule" id="MF_01605"/>
    </source>
</evidence>
<reference key="1">
    <citation type="journal article" date="2008" name="J. Bacteriol.">
        <title>Insights into the environmental resistance gene pool from the genome sequence of the multidrug-resistant environmental isolate Escherichia coli SMS-3-5.</title>
        <authorList>
            <person name="Fricke W.F."/>
            <person name="Wright M.S."/>
            <person name="Lindell A.H."/>
            <person name="Harkins D.M."/>
            <person name="Baker-Austin C."/>
            <person name="Ravel J."/>
            <person name="Stepanauskas R."/>
        </authorList>
    </citation>
    <scope>NUCLEOTIDE SEQUENCE [LARGE SCALE GENOMIC DNA]</scope>
    <source>
        <strain>SMS-3-5 / SECEC</strain>
    </source>
</reference>
<organism>
    <name type="scientific">Escherichia coli (strain SMS-3-5 / SECEC)</name>
    <dbReference type="NCBI Taxonomy" id="439855"/>
    <lineage>
        <taxon>Bacteria</taxon>
        <taxon>Pseudomonadati</taxon>
        <taxon>Pseudomonadota</taxon>
        <taxon>Gammaproteobacteria</taxon>
        <taxon>Enterobacterales</taxon>
        <taxon>Enterobacteriaceae</taxon>
        <taxon>Escherichia</taxon>
    </lineage>
</organism>
<accession>B1LM58</accession>
<name>6PGL_ECOSM</name>
<proteinExistence type="inferred from homology"/>
<keyword id="KW-0007">Acetylation</keyword>
<keyword id="KW-0119">Carbohydrate metabolism</keyword>
<keyword id="KW-0313">Glucose metabolism</keyword>
<keyword id="KW-0378">Hydrolase</keyword>
<sequence length="331" mass="36322">MKQTVYIASPESQQIHVWNLNHEGALTLTQVVDVPGQVQPMVVSPDKRYLYVGVRPEFRVLAYRIAPDDGALTFAAESALPGSPTHISTDHQGQFVFVGSYNAGNVSVTRLEDGLPVGVVDVVEGLDGCHSANISPDNRTLWVPALKQDRICLFTVSEDGHLVAQDPAEVTTVEGAGPRHMVFHPNEQYAYCVNELNSSVDVWELKDPHGNIECVQTLDMMPENFSDTRWAADIHITPDGRHLYACDRTASLITVFSVSEDGSVLSKEGFQPTETQPRGFNVDHSGKYLIAAGQKSHHISVYEIVGEQGLLHEKGRYAVGQGPMWVVVNAH</sequence>
<comment type="function">
    <text evidence="1">Catalyzes the hydrolysis of 6-phosphogluconolactone to 6-phosphogluconate.</text>
</comment>
<comment type="catalytic activity">
    <reaction evidence="1">
        <text>6-phospho-D-glucono-1,5-lactone + H2O = 6-phospho-D-gluconate + H(+)</text>
        <dbReference type="Rhea" id="RHEA:12556"/>
        <dbReference type="ChEBI" id="CHEBI:15377"/>
        <dbReference type="ChEBI" id="CHEBI:15378"/>
        <dbReference type="ChEBI" id="CHEBI:57955"/>
        <dbReference type="ChEBI" id="CHEBI:58759"/>
        <dbReference type="EC" id="3.1.1.31"/>
    </reaction>
</comment>
<comment type="pathway">
    <text evidence="1">Carbohydrate degradation; pentose phosphate pathway; D-ribulose 5-phosphate from D-glucose 6-phosphate (oxidative stage): step 2/3.</text>
</comment>
<comment type="similarity">
    <text evidence="1">Belongs to the cycloisomerase 2 family.</text>
</comment>
<dbReference type="EC" id="3.1.1.31" evidence="1"/>
<dbReference type="EMBL" id="CP000970">
    <property type="protein sequence ID" value="ACB15682.1"/>
    <property type="molecule type" value="Genomic_DNA"/>
</dbReference>
<dbReference type="RefSeq" id="WP_000815439.1">
    <property type="nucleotide sequence ID" value="NC_010498.1"/>
</dbReference>
<dbReference type="SMR" id="B1LM58"/>
<dbReference type="KEGG" id="ecm:EcSMS35_0790"/>
<dbReference type="HOGENOM" id="CLU_038716_2_0_6"/>
<dbReference type="UniPathway" id="UPA00115">
    <property type="reaction ID" value="UER00409"/>
</dbReference>
<dbReference type="Proteomes" id="UP000007011">
    <property type="component" value="Chromosome"/>
</dbReference>
<dbReference type="GO" id="GO:0005829">
    <property type="term" value="C:cytosol"/>
    <property type="evidence" value="ECO:0007669"/>
    <property type="project" value="TreeGrafter"/>
</dbReference>
<dbReference type="GO" id="GO:0017057">
    <property type="term" value="F:6-phosphogluconolactonase activity"/>
    <property type="evidence" value="ECO:0007669"/>
    <property type="project" value="UniProtKB-UniRule"/>
</dbReference>
<dbReference type="GO" id="GO:0006006">
    <property type="term" value="P:glucose metabolic process"/>
    <property type="evidence" value="ECO:0007669"/>
    <property type="project" value="UniProtKB-KW"/>
</dbReference>
<dbReference type="GO" id="GO:0009051">
    <property type="term" value="P:pentose-phosphate shunt, oxidative branch"/>
    <property type="evidence" value="ECO:0007669"/>
    <property type="project" value="UniProtKB-UniRule"/>
</dbReference>
<dbReference type="FunFam" id="2.130.10.10:FF:000051">
    <property type="entry name" value="6-phosphogluconolactonase"/>
    <property type="match status" value="1"/>
</dbReference>
<dbReference type="Gene3D" id="2.130.10.10">
    <property type="entry name" value="YVTN repeat-like/Quinoprotein amine dehydrogenase"/>
    <property type="match status" value="1"/>
</dbReference>
<dbReference type="HAMAP" id="MF_01605">
    <property type="entry name" value="6P_gluconolactonase"/>
    <property type="match status" value="1"/>
</dbReference>
<dbReference type="InterPro" id="IPR022528">
    <property type="entry name" value="6-phosphogluconolactonase_YbhE"/>
</dbReference>
<dbReference type="InterPro" id="IPR050282">
    <property type="entry name" value="Cycloisomerase_2"/>
</dbReference>
<dbReference type="InterPro" id="IPR019405">
    <property type="entry name" value="Lactonase_7-beta_prop"/>
</dbReference>
<dbReference type="InterPro" id="IPR011045">
    <property type="entry name" value="N2O_reductase_N"/>
</dbReference>
<dbReference type="InterPro" id="IPR015943">
    <property type="entry name" value="WD40/YVTN_repeat-like_dom_sf"/>
</dbReference>
<dbReference type="NCBIfam" id="NF008258">
    <property type="entry name" value="PRK11028.1"/>
    <property type="match status" value="1"/>
</dbReference>
<dbReference type="PANTHER" id="PTHR30344:SF1">
    <property type="entry name" value="6-PHOSPHOGLUCONOLACTONASE"/>
    <property type="match status" value="1"/>
</dbReference>
<dbReference type="PANTHER" id="PTHR30344">
    <property type="entry name" value="6-PHOSPHOGLUCONOLACTONASE-RELATED"/>
    <property type="match status" value="1"/>
</dbReference>
<dbReference type="Pfam" id="PF10282">
    <property type="entry name" value="Lactonase"/>
    <property type="match status" value="1"/>
</dbReference>
<dbReference type="SUPFAM" id="SSF50974">
    <property type="entry name" value="Nitrous oxide reductase, N-terminal domain"/>
    <property type="match status" value="1"/>
</dbReference>